<feature type="chain" id="PRO_0000092411" description="Probable branched-chain amino acid transport ATP-binding protein LivG">
    <location>
        <begin position="1"/>
        <end position="257"/>
    </location>
</feature>
<feature type="domain" description="ABC transporter" evidence="1">
    <location>
        <begin position="4"/>
        <end position="248"/>
    </location>
</feature>
<feature type="binding site" evidence="1">
    <location>
        <begin position="36"/>
        <end position="43"/>
    </location>
    <ligand>
        <name>ATP</name>
        <dbReference type="ChEBI" id="CHEBI:30616"/>
    </ligand>
</feature>
<protein>
    <recommendedName>
        <fullName>Probable branched-chain amino acid transport ATP-binding protein LivG</fullName>
    </recommendedName>
</protein>
<keyword id="KW-0029">Amino-acid transport</keyword>
<keyword id="KW-0067">ATP-binding</keyword>
<keyword id="KW-0547">Nucleotide-binding</keyword>
<keyword id="KW-1185">Reference proteome</keyword>
<keyword id="KW-0813">Transport</keyword>
<name>LIVG_ARCFU</name>
<organism>
    <name type="scientific">Archaeoglobus fulgidus (strain ATCC 49558 / DSM 4304 / JCM 9628 / NBRC 100126 / VC-16)</name>
    <dbReference type="NCBI Taxonomy" id="224325"/>
    <lineage>
        <taxon>Archaea</taxon>
        <taxon>Methanobacteriati</taxon>
        <taxon>Methanobacteriota</taxon>
        <taxon>Archaeoglobi</taxon>
        <taxon>Archaeoglobales</taxon>
        <taxon>Archaeoglobaceae</taxon>
        <taxon>Archaeoglobus</taxon>
    </lineage>
</organism>
<gene>
    <name type="primary">livG</name>
    <name type="ordered locus">AF_1390</name>
</gene>
<sequence length="257" mass="28855">MKILQTQNLSKFFDGLKALNRVNIGVEKGSITLVIGPNGSGKTTFINTVSGFYRADEGKVFFEGKDITNKPPHEISRLGIVRTFQIPQPLKKMTVLENLLIAPEGYGERIFHSVSGRWLKEEEEIVEKAFRILEFLKLDHLWDSEAQNLSGGQLKLLEVARAMMKDAKLLIMDEPIAGVNPVLSHSMLERFVELKKMGVSFLIVEHRLDIVLKYTDHIYVMANGSVIAEGKEEDILNNPKVVEVYLGAQDSEIECGV</sequence>
<comment type="function">
    <text>Probable component of a branched-chain amino-acid transport system.</text>
</comment>
<comment type="similarity">
    <text evidence="2">Belongs to the ABC transporter superfamily.</text>
</comment>
<comment type="sequence caution" evidence="2">
    <conflict type="erroneous initiation">
        <sequence resource="EMBL-CDS" id="AAB89855"/>
    </conflict>
</comment>
<evidence type="ECO:0000255" key="1">
    <source>
        <dbReference type="PROSITE-ProRule" id="PRU00434"/>
    </source>
</evidence>
<evidence type="ECO:0000305" key="2"/>
<dbReference type="EMBL" id="AE000782">
    <property type="protein sequence ID" value="AAB89855.1"/>
    <property type="status" value="ALT_INIT"/>
    <property type="molecule type" value="Genomic_DNA"/>
</dbReference>
<dbReference type="PIR" id="E69423">
    <property type="entry name" value="E69423"/>
</dbReference>
<dbReference type="RefSeq" id="WP_048064383.1">
    <property type="nucleotide sequence ID" value="NC_000917.1"/>
</dbReference>
<dbReference type="SMR" id="O28881"/>
<dbReference type="STRING" id="224325.AF_1390"/>
<dbReference type="PaxDb" id="224325-AF_1390"/>
<dbReference type="EnsemblBacteria" id="AAB89855">
    <property type="protein sequence ID" value="AAB89855"/>
    <property type="gene ID" value="AF_1390"/>
</dbReference>
<dbReference type="GeneID" id="1484614"/>
<dbReference type="KEGG" id="afu:AF_1390"/>
<dbReference type="eggNOG" id="arCOG00925">
    <property type="taxonomic scope" value="Archaea"/>
</dbReference>
<dbReference type="HOGENOM" id="CLU_000604_1_2_2"/>
<dbReference type="OrthoDB" id="44250at2157"/>
<dbReference type="PhylomeDB" id="O28881"/>
<dbReference type="Proteomes" id="UP000002199">
    <property type="component" value="Chromosome"/>
</dbReference>
<dbReference type="GO" id="GO:0005886">
    <property type="term" value="C:plasma membrane"/>
    <property type="evidence" value="ECO:0007669"/>
    <property type="project" value="TreeGrafter"/>
</dbReference>
<dbReference type="GO" id="GO:0005524">
    <property type="term" value="F:ATP binding"/>
    <property type="evidence" value="ECO:0007669"/>
    <property type="project" value="UniProtKB-KW"/>
</dbReference>
<dbReference type="GO" id="GO:0016887">
    <property type="term" value="F:ATP hydrolysis activity"/>
    <property type="evidence" value="ECO:0007669"/>
    <property type="project" value="InterPro"/>
</dbReference>
<dbReference type="GO" id="GO:0006865">
    <property type="term" value="P:amino acid transport"/>
    <property type="evidence" value="ECO:0007669"/>
    <property type="project" value="UniProtKB-KW"/>
</dbReference>
<dbReference type="CDD" id="cd03219">
    <property type="entry name" value="ABC_Mj1267_LivG_branched"/>
    <property type="match status" value="1"/>
</dbReference>
<dbReference type="FunFam" id="3.40.50.300:FF:000421">
    <property type="entry name" value="Branched-chain amino acid ABC transporter ATP-binding protein"/>
    <property type="match status" value="1"/>
</dbReference>
<dbReference type="Gene3D" id="3.40.50.300">
    <property type="entry name" value="P-loop containing nucleotide triphosphate hydrolases"/>
    <property type="match status" value="1"/>
</dbReference>
<dbReference type="InterPro" id="IPR003593">
    <property type="entry name" value="AAA+_ATPase"/>
</dbReference>
<dbReference type="InterPro" id="IPR051120">
    <property type="entry name" value="ABC_AA/LPS_Transport"/>
</dbReference>
<dbReference type="InterPro" id="IPR003439">
    <property type="entry name" value="ABC_transporter-like_ATP-bd"/>
</dbReference>
<dbReference type="InterPro" id="IPR017871">
    <property type="entry name" value="ABC_transporter-like_CS"/>
</dbReference>
<dbReference type="InterPro" id="IPR032823">
    <property type="entry name" value="BCA_ABC_TP_C"/>
</dbReference>
<dbReference type="InterPro" id="IPR027417">
    <property type="entry name" value="P-loop_NTPase"/>
</dbReference>
<dbReference type="PANTHER" id="PTHR45772:SF5">
    <property type="entry name" value="BRANCHED-CHAIN AMINO ACID TRANSPORT ATP-BINDING PROTEIN LIVG-RELATED"/>
    <property type="match status" value="1"/>
</dbReference>
<dbReference type="PANTHER" id="PTHR45772">
    <property type="entry name" value="CONSERVED COMPONENT OF ABC TRANSPORTER FOR NATURAL AMINO ACIDS-RELATED"/>
    <property type="match status" value="1"/>
</dbReference>
<dbReference type="Pfam" id="PF00005">
    <property type="entry name" value="ABC_tran"/>
    <property type="match status" value="1"/>
</dbReference>
<dbReference type="Pfam" id="PF12399">
    <property type="entry name" value="BCA_ABC_TP_C"/>
    <property type="match status" value="1"/>
</dbReference>
<dbReference type="SMART" id="SM00382">
    <property type="entry name" value="AAA"/>
    <property type="match status" value="1"/>
</dbReference>
<dbReference type="SUPFAM" id="SSF52540">
    <property type="entry name" value="P-loop containing nucleoside triphosphate hydrolases"/>
    <property type="match status" value="1"/>
</dbReference>
<dbReference type="PROSITE" id="PS00211">
    <property type="entry name" value="ABC_TRANSPORTER_1"/>
    <property type="match status" value="1"/>
</dbReference>
<dbReference type="PROSITE" id="PS50893">
    <property type="entry name" value="ABC_TRANSPORTER_2"/>
    <property type="match status" value="1"/>
</dbReference>
<proteinExistence type="inferred from homology"/>
<accession>O28881</accession>
<reference key="1">
    <citation type="journal article" date="1997" name="Nature">
        <title>The complete genome sequence of the hyperthermophilic, sulphate-reducing archaeon Archaeoglobus fulgidus.</title>
        <authorList>
            <person name="Klenk H.-P."/>
            <person name="Clayton R.A."/>
            <person name="Tomb J.-F."/>
            <person name="White O."/>
            <person name="Nelson K.E."/>
            <person name="Ketchum K.A."/>
            <person name="Dodson R.J."/>
            <person name="Gwinn M.L."/>
            <person name="Hickey E.K."/>
            <person name="Peterson J.D."/>
            <person name="Richardson D.L."/>
            <person name="Kerlavage A.R."/>
            <person name="Graham D.E."/>
            <person name="Kyrpides N.C."/>
            <person name="Fleischmann R.D."/>
            <person name="Quackenbush J."/>
            <person name="Lee N.H."/>
            <person name="Sutton G.G."/>
            <person name="Gill S.R."/>
            <person name="Kirkness E.F."/>
            <person name="Dougherty B.A."/>
            <person name="McKenney K."/>
            <person name="Adams M.D."/>
            <person name="Loftus B.J."/>
            <person name="Peterson S.N."/>
            <person name="Reich C.I."/>
            <person name="McNeil L.K."/>
            <person name="Badger J.H."/>
            <person name="Glodek A."/>
            <person name="Zhou L."/>
            <person name="Overbeek R."/>
            <person name="Gocayne J.D."/>
            <person name="Weidman J.F."/>
            <person name="McDonald L.A."/>
            <person name="Utterback T.R."/>
            <person name="Cotton M.D."/>
            <person name="Spriggs T."/>
            <person name="Artiach P."/>
            <person name="Kaine B.P."/>
            <person name="Sykes S.M."/>
            <person name="Sadow P.W."/>
            <person name="D'Andrea K.P."/>
            <person name="Bowman C."/>
            <person name="Fujii C."/>
            <person name="Garland S.A."/>
            <person name="Mason T.M."/>
            <person name="Olsen G.J."/>
            <person name="Fraser C.M."/>
            <person name="Smith H.O."/>
            <person name="Woese C.R."/>
            <person name="Venter J.C."/>
        </authorList>
    </citation>
    <scope>NUCLEOTIDE SEQUENCE [LARGE SCALE GENOMIC DNA]</scope>
    <source>
        <strain>ATCC 49558 / DSM 4304 / JCM 9628 / NBRC 100126 / VC-16</strain>
    </source>
</reference>